<feature type="chain" id="PRO_1000061557" description="Putative pre-16S rRNA nuclease">
    <location>
        <begin position="1"/>
        <end position="163"/>
    </location>
</feature>
<dbReference type="EC" id="3.1.-.-" evidence="1"/>
<dbReference type="EMBL" id="CP000463">
    <property type="protein sequence ID" value="ABJ07300.1"/>
    <property type="molecule type" value="Genomic_DNA"/>
</dbReference>
<dbReference type="SMR" id="Q07L84"/>
<dbReference type="STRING" id="316055.RPE_3368"/>
<dbReference type="KEGG" id="rpe:RPE_3368"/>
<dbReference type="eggNOG" id="COG0816">
    <property type="taxonomic scope" value="Bacteria"/>
</dbReference>
<dbReference type="HOGENOM" id="CLU_098240_1_1_5"/>
<dbReference type="OrthoDB" id="9796140at2"/>
<dbReference type="GO" id="GO:0005829">
    <property type="term" value="C:cytosol"/>
    <property type="evidence" value="ECO:0007669"/>
    <property type="project" value="TreeGrafter"/>
</dbReference>
<dbReference type="GO" id="GO:0004518">
    <property type="term" value="F:nuclease activity"/>
    <property type="evidence" value="ECO:0007669"/>
    <property type="project" value="UniProtKB-KW"/>
</dbReference>
<dbReference type="GO" id="GO:0000967">
    <property type="term" value="P:rRNA 5'-end processing"/>
    <property type="evidence" value="ECO:0007669"/>
    <property type="project" value="UniProtKB-UniRule"/>
</dbReference>
<dbReference type="CDD" id="cd16964">
    <property type="entry name" value="YqgF"/>
    <property type="match status" value="1"/>
</dbReference>
<dbReference type="Gene3D" id="3.30.420.140">
    <property type="entry name" value="YqgF/RNase H-like domain"/>
    <property type="match status" value="1"/>
</dbReference>
<dbReference type="HAMAP" id="MF_00651">
    <property type="entry name" value="Nuclease_YqgF"/>
    <property type="match status" value="1"/>
</dbReference>
<dbReference type="InterPro" id="IPR012337">
    <property type="entry name" value="RNaseH-like_sf"/>
</dbReference>
<dbReference type="InterPro" id="IPR005227">
    <property type="entry name" value="YqgF"/>
</dbReference>
<dbReference type="InterPro" id="IPR006641">
    <property type="entry name" value="YqgF/RNaseH-like_dom"/>
</dbReference>
<dbReference type="InterPro" id="IPR037027">
    <property type="entry name" value="YqgF/RNaseH-like_dom_sf"/>
</dbReference>
<dbReference type="NCBIfam" id="TIGR00250">
    <property type="entry name" value="RNAse_H_YqgF"/>
    <property type="match status" value="1"/>
</dbReference>
<dbReference type="PANTHER" id="PTHR33317">
    <property type="entry name" value="POLYNUCLEOTIDYL TRANSFERASE, RIBONUCLEASE H-LIKE SUPERFAMILY PROTEIN"/>
    <property type="match status" value="1"/>
</dbReference>
<dbReference type="PANTHER" id="PTHR33317:SF4">
    <property type="entry name" value="POLYNUCLEOTIDYL TRANSFERASE, RIBONUCLEASE H-LIKE SUPERFAMILY PROTEIN"/>
    <property type="match status" value="1"/>
</dbReference>
<dbReference type="Pfam" id="PF03652">
    <property type="entry name" value="RuvX"/>
    <property type="match status" value="1"/>
</dbReference>
<dbReference type="SMART" id="SM00732">
    <property type="entry name" value="YqgFc"/>
    <property type="match status" value="1"/>
</dbReference>
<dbReference type="SUPFAM" id="SSF53098">
    <property type="entry name" value="Ribonuclease H-like"/>
    <property type="match status" value="1"/>
</dbReference>
<sequence length="163" mass="17278">MPAPILPLIEAAAQWPPTGALIGLDLGTKTIGVAVSDPARRLATGVETILRKTFTTDAARLLALATERKAVGLVLGLPINMDASEGPRAQSTRAFARNLARLTELPIGLWDERLSTAAVERELIANDVSRAKRAKVIDEHAAIFILQGALDRLAVLNRSTGAA</sequence>
<keyword id="KW-0963">Cytoplasm</keyword>
<keyword id="KW-0378">Hydrolase</keyword>
<keyword id="KW-0540">Nuclease</keyword>
<keyword id="KW-0690">Ribosome biogenesis</keyword>
<name>YQGF_RHOP5</name>
<comment type="function">
    <text evidence="1">Could be a nuclease involved in processing of the 5'-end of pre-16S rRNA.</text>
</comment>
<comment type="subcellular location">
    <subcellularLocation>
        <location evidence="1">Cytoplasm</location>
    </subcellularLocation>
</comment>
<comment type="similarity">
    <text evidence="1">Belongs to the YqgF nuclease family.</text>
</comment>
<organism>
    <name type="scientific">Rhodopseudomonas palustris (strain BisA53)</name>
    <dbReference type="NCBI Taxonomy" id="316055"/>
    <lineage>
        <taxon>Bacteria</taxon>
        <taxon>Pseudomonadati</taxon>
        <taxon>Pseudomonadota</taxon>
        <taxon>Alphaproteobacteria</taxon>
        <taxon>Hyphomicrobiales</taxon>
        <taxon>Nitrobacteraceae</taxon>
        <taxon>Rhodopseudomonas</taxon>
    </lineage>
</organism>
<evidence type="ECO:0000255" key="1">
    <source>
        <dbReference type="HAMAP-Rule" id="MF_00651"/>
    </source>
</evidence>
<gene>
    <name type="ordered locus">RPE_3368</name>
</gene>
<protein>
    <recommendedName>
        <fullName evidence="1">Putative pre-16S rRNA nuclease</fullName>
        <ecNumber evidence="1">3.1.-.-</ecNumber>
    </recommendedName>
</protein>
<accession>Q07L84</accession>
<reference key="1">
    <citation type="submission" date="2006-09" db="EMBL/GenBank/DDBJ databases">
        <title>Complete sequence of Rhodopseudomonas palustris BisA53.</title>
        <authorList>
            <consortium name="US DOE Joint Genome Institute"/>
            <person name="Copeland A."/>
            <person name="Lucas S."/>
            <person name="Lapidus A."/>
            <person name="Barry K."/>
            <person name="Detter J.C."/>
            <person name="Glavina del Rio T."/>
            <person name="Hammon N."/>
            <person name="Israni S."/>
            <person name="Dalin E."/>
            <person name="Tice H."/>
            <person name="Pitluck S."/>
            <person name="Chain P."/>
            <person name="Malfatti S."/>
            <person name="Shin M."/>
            <person name="Vergez L."/>
            <person name="Schmutz J."/>
            <person name="Larimer F."/>
            <person name="Land M."/>
            <person name="Hauser L."/>
            <person name="Pelletier D.A."/>
            <person name="Kyrpides N."/>
            <person name="Kim E."/>
            <person name="Harwood C.S."/>
            <person name="Oda Y."/>
            <person name="Richardson P."/>
        </authorList>
    </citation>
    <scope>NUCLEOTIDE SEQUENCE [LARGE SCALE GENOMIC DNA]</scope>
    <source>
        <strain>BisA53</strain>
    </source>
</reference>
<proteinExistence type="inferred from homology"/>